<organism>
    <name type="scientific">Erwinia tasmaniensis (strain DSM 17950 / CFBP 7177 / CIP 109463 / NCPPB 4357 / Et1/99)</name>
    <dbReference type="NCBI Taxonomy" id="465817"/>
    <lineage>
        <taxon>Bacteria</taxon>
        <taxon>Pseudomonadati</taxon>
        <taxon>Pseudomonadota</taxon>
        <taxon>Gammaproteobacteria</taxon>
        <taxon>Enterobacterales</taxon>
        <taxon>Erwiniaceae</taxon>
        <taxon>Erwinia</taxon>
    </lineage>
</organism>
<keyword id="KW-0328">Glycosyltransferase</keyword>
<keyword id="KW-1185">Reference proteome</keyword>
<keyword id="KW-0808">Transferase</keyword>
<accession>B2VH53</accession>
<sequence length="239" mass="25833">MATPHINAEMGDFADVVLMPGDPLRAKHIADTFLQDAVEVNNVRGMLGYTGTYKGRKISVMGHGMGIPSCSIYAKELITEFGVKKIIRVGSCGAVRTDVKLRDVVIGMGACTDSKVNRMRFKDHDFAAIADFDMVRNAVDAAQALGVKARVGNIFSADLFYTPDPQMFDVMEKYGVLGVEMEAAGIYGVAAEFGAKALAICTVSDHIRTHEQTTAAERQTTFSEMIEIALESVLLGDKA</sequence>
<feature type="chain" id="PRO_1000186195" description="Purine nucleoside phosphorylase DeoD-type">
    <location>
        <begin position="1"/>
        <end position="239"/>
    </location>
</feature>
<feature type="active site" description="Proton donor" evidence="2">
    <location>
        <position position="205"/>
    </location>
</feature>
<feature type="binding site" evidence="1">
    <location>
        <position position="5"/>
    </location>
    <ligand>
        <name>a purine D-ribonucleoside</name>
        <dbReference type="ChEBI" id="CHEBI:142355"/>
        <note>ligand shared between dimeric partners</note>
    </ligand>
</feature>
<feature type="binding site" description="in other chain" evidence="1">
    <location>
        <position position="21"/>
    </location>
    <ligand>
        <name>phosphate</name>
        <dbReference type="ChEBI" id="CHEBI:43474"/>
        <note>ligand shared between dimeric partners</note>
    </ligand>
</feature>
<feature type="binding site" description="in other chain" evidence="1">
    <location>
        <position position="25"/>
    </location>
    <ligand>
        <name>phosphate</name>
        <dbReference type="ChEBI" id="CHEBI:43474"/>
        <note>ligand shared between dimeric partners</note>
    </ligand>
</feature>
<feature type="binding site" evidence="1">
    <location>
        <position position="44"/>
    </location>
    <ligand>
        <name>phosphate</name>
        <dbReference type="ChEBI" id="CHEBI:43474"/>
        <note>ligand shared between dimeric partners</note>
    </ligand>
</feature>
<feature type="binding site" description="in other chain" evidence="1">
    <location>
        <begin position="88"/>
        <end position="91"/>
    </location>
    <ligand>
        <name>phosphate</name>
        <dbReference type="ChEBI" id="CHEBI:43474"/>
        <note>ligand shared between dimeric partners</note>
    </ligand>
</feature>
<feature type="binding site" description="in other chain" evidence="1">
    <location>
        <begin position="180"/>
        <end position="182"/>
    </location>
    <ligand>
        <name>a purine D-ribonucleoside</name>
        <dbReference type="ChEBI" id="CHEBI:142355"/>
        <note>ligand shared between dimeric partners</note>
    </ligand>
</feature>
<feature type="binding site" description="in other chain" evidence="1">
    <location>
        <begin position="204"/>
        <end position="205"/>
    </location>
    <ligand>
        <name>a purine D-ribonucleoside</name>
        <dbReference type="ChEBI" id="CHEBI:142355"/>
        <note>ligand shared between dimeric partners</note>
    </ligand>
</feature>
<feature type="site" description="Important for catalytic activity" evidence="2">
    <location>
        <position position="218"/>
    </location>
</feature>
<evidence type="ECO:0000250" key="1">
    <source>
        <dbReference type="UniProtKB" id="P50389"/>
    </source>
</evidence>
<evidence type="ECO:0000255" key="2">
    <source>
        <dbReference type="HAMAP-Rule" id="MF_01627"/>
    </source>
</evidence>
<dbReference type="EC" id="2.4.2.1" evidence="2"/>
<dbReference type="EMBL" id="CU468135">
    <property type="protein sequence ID" value="CAO95715.1"/>
    <property type="molecule type" value="Genomic_DNA"/>
</dbReference>
<dbReference type="RefSeq" id="WP_012440417.1">
    <property type="nucleotide sequence ID" value="NC_010694.1"/>
</dbReference>
<dbReference type="SMR" id="B2VH53"/>
<dbReference type="STRING" id="465817.ETA_06690"/>
<dbReference type="KEGG" id="eta:ETA_06690"/>
<dbReference type="eggNOG" id="COG0813">
    <property type="taxonomic scope" value="Bacteria"/>
</dbReference>
<dbReference type="HOGENOM" id="CLU_068457_2_0_6"/>
<dbReference type="OrthoDB" id="9782889at2"/>
<dbReference type="Proteomes" id="UP000001726">
    <property type="component" value="Chromosome"/>
</dbReference>
<dbReference type="GO" id="GO:0005829">
    <property type="term" value="C:cytosol"/>
    <property type="evidence" value="ECO:0007669"/>
    <property type="project" value="TreeGrafter"/>
</dbReference>
<dbReference type="GO" id="GO:0004731">
    <property type="term" value="F:purine-nucleoside phosphorylase activity"/>
    <property type="evidence" value="ECO:0007669"/>
    <property type="project" value="UniProtKB-UniRule"/>
</dbReference>
<dbReference type="GO" id="GO:0006152">
    <property type="term" value="P:purine nucleoside catabolic process"/>
    <property type="evidence" value="ECO:0007669"/>
    <property type="project" value="TreeGrafter"/>
</dbReference>
<dbReference type="CDD" id="cd09006">
    <property type="entry name" value="PNP_EcPNPI-like"/>
    <property type="match status" value="1"/>
</dbReference>
<dbReference type="FunFam" id="3.40.50.1580:FF:000002">
    <property type="entry name" value="Purine nucleoside phosphorylase DeoD-type"/>
    <property type="match status" value="1"/>
</dbReference>
<dbReference type="Gene3D" id="3.40.50.1580">
    <property type="entry name" value="Nucleoside phosphorylase domain"/>
    <property type="match status" value="1"/>
</dbReference>
<dbReference type="HAMAP" id="MF_01627">
    <property type="entry name" value="Pur_nucleosid_phosp"/>
    <property type="match status" value="1"/>
</dbReference>
<dbReference type="InterPro" id="IPR004402">
    <property type="entry name" value="DeoD-type"/>
</dbReference>
<dbReference type="InterPro" id="IPR018016">
    <property type="entry name" value="Nucleoside_phosphorylase_CS"/>
</dbReference>
<dbReference type="InterPro" id="IPR000845">
    <property type="entry name" value="Nucleoside_phosphorylase_d"/>
</dbReference>
<dbReference type="InterPro" id="IPR035994">
    <property type="entry name" value="Nucleoside_phosphorylase_sf"/>
</dbReference>
<dbReference type="NCBIfam" id="TIGR00107">
    <property type="entry name" value="deoD"/>
    <property type="match status" value="1"/>
</dbReference>
<dbReference type="NCBIfam" id="NF004489">
    <property type="entry name" value="PRK05819.1"/>
    <property type="match status" value="1"/>
</dbReference>
<dbReference type="NCBIfam" id="NF009914">
    <property type="entry name" value="PRK13374.1"/>
    <property type="match status" value="1"/>
</dbReference>
<dbReference type="PANTHER" id="PTHR43691:SF2">
    <property type="entry name" value="PURINE NUCLEOSIDE PHOSPHORYLASE DEOD-TYPE"/>
    <property type="match status" value="1"/>
</dbReference>
<dbReference type="PANTHER" id="PTHR43691">
    <property type="entry name" value="URIDINE PHOSPHORYLASE"/>
    <property type="match status" value="1"/>
</dbReference>
<dbReference type="Pfam" id="PF01048">
    <property type="entry name" value="PNP_UDP_1"/>
    <property type="match status" value="1"/>
</dbReference>
<dbReference type="SUPFAM" id="SSF53167">
    <property type="entry name" value="Purine and uridine phosphorylases"/>
    <property type="match status" value="1"/>
</dbReference>
<dbReference type="PROSITE" id="PS01232">
    <property type="entry name" value="PNP_UDP_1"/>
    <property type="match status" value="1"/>
</dbReference>
<comment type="function">
    <text evidence="2">Catalyzes the reversible phosphorolytic breakdown of the N-glycosidic bond in the beta-(deoxy)ribonucleoside molecules, with the formation of the corresponding free purine bases and pentose-1-phosphate.</text>
</comment>
<comment type="catalytic activity">
    <reaction evidence="2">
        <text>a purine D-ribonucleoside + phosphate = a purine nucleobase + alpha-D-ribose 1-phosphate</text>
        <dbReference type="Rhea" id="RHEA:19805"/>
        <dbReference type="ChEBI" id="CHEBI:26386"/>
        <dbReference type="ChEBI" id="CHEBI:43474"/>
        <dbReference type="ChEBI" id="CHEBI:57720"/>
        <dbReference type="ChEBI" id="CHEBI:142355"/>
        <dbReference type="EC" id="2.4.2.1"/>
    </reaction>
</comment>
<comment type="catalytic activity">
    <reaction evidence="2">
        <text>a purine 2'-deoxy-D-ribonucleoside + phosphate = a purine nucleobase + 2-deoxy-alpha-D-ribose 1-phosphate</text>
        <dbReference type="Rhea" id="RHEA:36431"/>
        <dbReference type="ChEBI" id="CHEBI:26386"/>
        <dbReference type="ChEBI" id="CHEBI:43474"/>
        <dbReference type="ChEBI" id="CHEBI:57259"/>
        <dbReference type="ChEBI" id="CHEBI:142361"/>
        <dbReference type="EC" id="2.4.2.1"/>
    </reaction>
</comment>
<comment type="subunit">
    <text evidence="2">Homohexamer; trimer of homodimers.</text>
</comment>
<comment type="similarity">
    <text evidence="2">Belongs to the PNP/UDP phosphorylase family.</text>
</comment>
<gene>
    <name evidence="2" type="primary">deoD</name>
    <name type="ordered locus">ETA_06690</name>
</gene>
<name>DEOD_ERWT9</name>
<proteinExistence type="inferred from homology"/>
<reference key="1">
    <citation type="journal article" date="2008" name="Environ. Microbiol.">
        <title>The genome of Erwinia tasmaniensis strain Et1/99, a non-pathogenic bacterium in the genus Erwinia.</title>
        <authorList>
            <person name="Kube M."/>
            <person name="Migdoll A.M."/>
            <person name="Mueller I."/>
            <person name="Kuhl H."/>
            <person name="Beck A."/>
            <person name="Reinhardt R."/>
            <person name="Geider K."/>
        </authorList>
    </citation>
    <scope>NUCLEOTIDE SEQUENCE [LARGE SCALE GENOMIC DNA]</scope>
    <source>
        <strain>DSM 17950 / CFBP 7177 / CIP 109463 / NCPPB 4357 / Et1/99</strain>
    </source>
</reference>
<protein>
    <recommendedName>
        <fullName evidence="2">Purine nucleoside phosphorylase DeoD-type</fullName>
        <shortName evidence="2">PNP</shortName>
        <ecNumber evidence="2">2.4.2.1</ecNumber>
    </recommendedName>
</protein>